<sequence length="343" mass="37049">MDDNKRKSLDAALKSLDKTFGKGTILRLGDKEVEQIDSIGTGSVGLDLALGIGGVPKGRIIEIYGPESSGKTTLTLHIIAECQKAGGVCAFIDAEHALDVKYAKNLGVNTDDLYVSQPDFGEQALEIVETIARSGAVDLIVVDSVAALTPKAEIEGDMGDQHVGLQARLMSQALRKLTGIVHKMNTTVIFINQIRMKIGAMGYGTPETTTGGNALKFYASVRLDVRKVATLKQNEEPIGNRVKVKVVKNKVAPPFRQAEFDVMFGEGLSREGELIDYGVKLDIVDKSGAWFSYKDKKLGQGRENSKAFLKENPEIADEITKAIQNSMGIEGMISGSEDDEGEE</sequence>
<name>RECA_CAMJJ</name>
<dbReference type="EMBL" id="U03121">
    <property type="protein sequence ID" value="AAA17793.1"/>
    <property type="molecule type" value="Unassigned_DNA"/>
</dbReference>
<dbReference type="EMBL" id="CP000538">
    <property type="protein sequence ID" value="EAQ72720.1"/>
    <property type="molecule type" value="Genomic_DNA"/>
</dbReference>
<dbReference type="PIR" id="I40770">
    <property type="entry name" value="I40770"/>
</dbReference>
<dbReference type="RefSeq" id="WP_002851424.1">
    <property type="nucleotide sequence ID" value="NC_008787.1"/>
</dbReference>
<dbReference type="SMR" id="A1W1S5"/>
<dbReference type="KEGG" id="cjj:CJJ81176_1669"/>
<dbReference type="eggNOG" id="COG0468">
    <property type="taxonomic scope" value="Bacteria"/>
</dbReference>
<dbReference type="HOGENOM" id="CLU_040469_1_2_7"/>
<dbReference type="Proteomes" id="UP000000646">
    <property type="component" value="Chromosome"/>
</dbReference>
<dbReference type="GO" id="GO:0005829">
    <property type="term" value="C:cytosol"/>
    <property type="evidence" value="ECO:0007669"/>
    <property type="project" value="TreeGrafter"/>
</dbReference>
<dbReference type="GO" id="GO:0005524">
    <property type="term" value="F:ATP binding"/>
    <property type="evidence" value="ECO:0007669"/>
    <property type="project" value="UniProtKB-UniRule"/>
</dbReference>
<dbReference type="GO" id="GO:0016887">
    <property type="term" value="F:ATP hydrolysis activity"/>
    <property type="evidence" value="ECO:0007669"/>
    <property type="project" value="InterPro"/>
</dbReference>
<dbReference type="GO" id="GO:0140664">
    <property type="term" value="F:ATP-dependent DNA damage sensor activity"/>
    <property type="evidence" value="ECO:0007669"/>
    <property type="project" value="InterPro"/>
</dbReference>
<dbReference type="GO" id="GO:0003684">
    <property type="term" value="F:damaged DNA binding"/>
    <property type="evidence" value="ECO:0007669"/>
    <property type="project" value="UniProtKB-UniRule"/>
</dbReference>
<dbReference type="GO" id="GO:0003697">
    <property type="term" value="F:single-stranded DNA binding"/>
    <property type="evidence" value="ECO:0007669"/>
    <property type="project" value="UniProtKB-UniRule"/>
</dbReference>
<dbReference type="GO" id="GO:0006310">
    <property type="term" value="P:DNA recombination"/>
    <property type="evidence" value="ECO:0007669"/>
    <property type="project" value="UniProtKB-UniRule"/>
</dbReference>
<dbReference type="GO" id="GO:0006281">
    <property type="term" value="P:DNA repair"/>
    <property type="evidence" value="ECO:0007669"/>
    <property type="project" value="UniProtKB-UniRule"/>
</dbReference>
<dbReference type="GO" id="GO:0009432">
    <property type="term" value="P:SOS response"/>
    <property type="evidence" value="ECO:0007669"/>
    <property type="project" value="UniProtKB-UniRule"/>
</dbReference>
<dbReference type="CDD" id="cd00983">
    <property type="entry name" value="RecA"/>
    <property type="match status" value="1"/>
</dbReference>
<dbReference type="FunFam" id="3.40.50.300:FF:000087">
    <property type="entry name" value="Recombinase RecA"/>
    <property type="match status" value="1"/>
</dbReference>
<dbReference type="Gene3D" id="3.40.50.300">
    <property type="entry name" value="P-loop containing nucleotide triphosphate hydrolases"/>
    <property type="match status" value="1"/>
</dbReference>
<dbReference type="HAMAP" id="MF_00268">
    <property type="entry name" value="RecA"/>
    <property type="match status" value="1"/>
</dbReference>
<dbReference type="InterPro" id="IPR003593">
    <property type="entry name" value="AAA+_ATPase"/>
</dbReference>
<dbReference type="InterPro" id="IPR013765">
    <property type="entry name" value="DNA_recomb/repair_RecA"/>
</dbReference>
<dbReference type="InterPro" id="IPR020584">
    <property type="entry name" value="DNA_recomb/repair_RecA_CS"/>
</dbReference>
<dbReference type="InterPro" id="IPR027417">
    <property type="entry name" value="P-loop_NTPase"/>
</dbReference>
<dbReference type="InterPro" id="IPR049261">
    <property type="entry name" value="RecA-like_C"/>
</dbReference>
<dbReference type="InterPro" id="IPR049428">
    <property type="entry name" value="RecA-like_N"/>
</dbReference>
<dbReference type="InterPro" id="IPR020588">
    <property type="entry name" value="RecA_ATP-bd"/>
</dbReference>
<dbReference type="InterPro" id="IPR023400">
    <property type="entry name" value="RecA_C_sf"/>
</dbReference>
<dbReference type="InterPro" id="IPR020587">
    <property type="entry name" value="RecA_monomer-monomer_interface"/>
</dbReference>
<dbReference type="NCBIfam" id="TIGR02012">
    <property type="entry name" value="tigrfam_recA"/>
    <property type="match status" value="1"/>
</dbReference>
<dbReference type="PANTHER" id="PTHR45900:SF1">
    <property type="entry name" value="MITOCHONDRIAL DNA REPAIR PROTEIN RECA HOMOLOG-RELATED"/>
    <property type="match status" value="1"/>
</dbReference>
<dbReference type="PANTHER" id="PTHR45900">
    <property type="entry name" value="RECA"/>
    <property type="match status" value="1"/>
</dbReference>
<dbReference type="Pfam" id="PF00154">
    <property type="entry name" value="RecA"/>
    <property type="match status" value="1"/>
</dbReference>
<dbReference type="Pfam" id="PF21096">
    <property type="entry name" value="RecA_C"/>
    <property type="match status" value="1"/>
</dbReference>
<dbReference type="PRINTS" id="PR00142">
    <property type="entry name" value="RECA"/>
</dbReference>
<dbReference type="SMART" id="SM00382">
    <property type="entry name" value="AAA"/>
    <property type="match status" value="1"/>
</dbReference>
<dbReference type="SUPFAM" id="SSF52540">
    <property type="entry name" value="P-loop containing nucleoside triphosphate hydrolases"/>
    <property type="match status" value="1"/>
</dbReference>
<dbReference type="SUPFAM" id="SSF54752">
    <property type="entry name" value="RecA protein, C-terminal domain"/>
    <property type="match status" value="1"/>
</dbReference>
<dbReference type="PROSITE" id="PS00321">
    <property type="entry name" value="RECA_1"/>
    <property type="match status" value="1"/>
</dbReference>
<dbReference type="PROSITE" id="PS50162">
    <property type="entry name" value="RECA_2"/>
    <property type="match status" value="1"/>
</dbReference>
<dbReference type="PROSITE" id="PS50163">
    <property type="entry name" value="RECA_3"/>
    <property type="match status" value="1"/>
</dbReference>
<keyword id="KW-0067">ATP-binding</keyword>
<keyword id="KW-0963">Cytoplasm</keyword>
<keyword id="KW-0227">DNA damage</keyword>
<keyword id="KW-0233">DNA recombination</keyword>
<keyword id="KW-0234">DNA repair</keyword>
<keyword id="KW-0238">DNA-binding</keyword>
<keyword id="KW-0547">Nucleotide-binding</keyword>
<keyword id="KW-0742">SOS response</keyword>
<gene>
    <name evidence="1" type="primary">recA</name>
    <name type="ordered locus">CJJ81176_1669</name>
</gene>
<comment type="function">
    <text>Can catalyze the hydrolysis of ATP in the presence of single-stranded DNA, the ATP-dependent uptake of single-stranded DNA by duplex DNA, and the ATP-dependent hybridization of homologous single-stranded DNAs. It interacts with LexA causing its activation and leading to its autocatalytic cleavage.</text>
</comment>
<comment type="subcellular location">
    <subcellularLocation>
        <location evidence="1">Cytoplasm</location>
    </subcellularLocation>
</comment>
<comment type="similarity">
    <text evidence="1">Belongs to the RecA family.</text>
</comment>
<protein>
    <recommendedName>
        <fullName evidence="1">Protein RecA</fullName>
    </recommendedName>
    <alternativeName>
        <fullName evidence="1">Recombinase A</fullName>
    </alternativeName>
</protein>
<feature type="chain" id="PRO_0000285824" description="Protein RecA">
    <location>
        <begin position="1"/>
        <end position="343"/>
    </location>
</feature>
<feature type="binding site" evidence="1">
    <location>
        <begin position="65"/>
        <end position="72"/>
    </location>
    <ligand>
        <name>ATP</name>
        <dbReference type="ChEBI" id="CHEBI:30616"/>
    </ligand>
</feature>
<feature type="sequence conflict" description="In Ref. 1; AAA17793." evidence="2" ref="1">
    <original>F</original>
    <variation>I</variation>
    <location>
        <position position="217"/>
    </location>
</feature>
<proteinExistence type="inferred from homology"/>
<reference key="1">
    <citation type="journal article" date="1994" name="Infect. Immun.">
        <title>Development and characterization of recA mutants of Campylobacter jejuni for inclusion in attenuated vaccines.</title>
        <authorList>
            <person name="Guerry P."/>
            <person name="Pope P.M."/>
            <person name="Burr D.H."/>
            <person name="Leifer J."/>
            <person name="Joseph S.W."/>
            <person name="Bourgeois A.L."/>
        </authorList>
    </citation>
    <scope>NUCLEOTIDE SEQUENCE [GENOMIC DNA]</scope>
</reference>
<reference key="2">
    <citation type="submission" date="2006-12" db="EMBL/GenBank/DDBJ databases">
        <authorList>
            <person name="Fouts D.E."/>
            <person name="Nelson K.E."/>
            <person name="Sebastian Y."/>
        </authorList>
    </citation>
    <scope>NUCLEOTIDE SEQUENCE [LARGE SCALE GENOMIC DNA]</scope>
    <source>
        <strain>81-176</strain>
    </source>
</reference>
<organism>
    <name type="scientific">Campylobacter jejuni subsp. jejuni serotype O:23/36 (strain 81-176)</name>
    <dbReference type="NCBI Taxonomy" id="354242"/>
    <lineage>
        <taxon>Bacteria</taxon>
        <taxon>Pseudomonadati</taxon>
        <taxon>Campylobacterota</taxon>
        <taxon>Epsilonproteobacteria</taxon>
        <taxon>Campylobacterales</taxon>
        <taxon>Campylobacteraceae</taxon>
        <taxon>Campylobacter</taxon>
    </lineage>
</organism>
<evidence type="ECO:0000255" key="1">
    <source>
        <dbReference type="HAMAP-Rule" id="MF_00268"/>
    </source>
</evidence>
<evidence type="ECO:0000305" key="2"/>
<accession>A1W1S5</accession>
<accession>P42440</accession>
<accession>Q9PM04</accession>